<keyword id="KW-0025">Alternative splicing</keyword>
<keyword id="KW-0175">Coiled coil</keyword>
<keyword id="KW-1185">Reference proteome</keyword>
<keyword id="KW-0694">RNA-binding</keyword>
<sequence length="293" mass="32452">MTGKTQTSNITNKNDPKSINSRVFIGNLNTAIVKKVDIEAIFSKYGKIVGCSVHKGYAFVQYMSERHARAAVAGENARVIAGQPLDINMAGEPKPYRPKPGSKRPLSALYRLESKEPFLSVGGYVFDYDYYRDDFYNRLFDYHGRVPPPPRAVIPLKRPRVAVTTTRRGKGVFSMKGGSRSTVGGSSSSGSKLKSDELQTIKKELTQIKTKIDSLLGRLEKIEKQQKAEAEAQKKQLEESIELIQDECVSENADHSTEEPAEGGQEADGGEMTDGVEEDFDEDGGHELFLQIK</sequence>
<dbReference type="EMBL" id="AK032086">
    <property type="protein sequence ID" value="BAC27689.1"/>
    <property type="molecule type" value="mRNA"/>
</dbReference>
<dbReference type="EMBL" id="AK038465">
    <property type="protein sequence ID" value="BAC30009.1"/>
    <property type="molecule type" value="mRNA"/>
</dbReference>
<dbReference type="EMBL" id="AK079659">
    <property type="protein sequence ID" value="BAC37718.1"/>
    <property type="molecule type" value="mRNA"/>
</dbReference>
<dbReference type="EMBL" id="BC052358">
    <property type="protein sequence ID" value="AAH52358.1"/>
    <property type="molecule type" value="mRNA"/>
</dbReference>
<dbReference type="CCDS" id="CCDS50863.1">
    <molecule id="Q8BTF8-2"/>
</dbReference>
<dbReference type="CCDS" id="CCDS84609.1">
    <molecule id="Q8BTF8-1"/>
</dbReference>
<dbReference type="RefSeq" id="NP_001156800.1">
    <molecule id="Q8BTF8-1"/>
    <property type="nucleotide sequence ID" value="NM_001163328.1"/>
</dbReference>
<dbReference type="RefSeq" id="NP_001156801.1">
    <molecule id="Q8BTF8-2"/>
    <property type="nucleotide sequence ID" value="NM_001163329.2"/>
</dbReference>
<dbReference type="RefSeq" id="NP_001343962.1">
    <molecule id="Q8BTF8-1"/>
    <property type="nucleotide sequence ID" value="NM_001357033.1"/>
</dbReference>
<dbReference type="RefSeq" id="NP_848746.1">
    <molecule id="Q8BTF8-1"/>
    <property type="nucleotide sequence ID" value="NM_178631.4"/>
</dbReference>
<dbReference type="RefSeq" id="XP_011246452.1">
    <molecule id="Q8BTF8-1"/>
    <property type="nucleotide sequence ID" value="XM_011248150.3"/>
</dbReference>
<dbReference type="RefSeq" id="XP_017175290.1">
    <property type="nucleotide sequence ID" value="XM_017319801.1"/>
</dbReference>
<dbReference type="SMR" id="Q8BTF8"/>
<dbReference type="BioGRID" id="218384">
    <property type="interactions" value="1"/>
</dbReference>
<dbReference type="FunCoup" id="Q8BTF8">
    <property type="interactions" value="2002"/>
</dbReference>
<dbReference type="STRING" id="10090.ENSMUSP00000148795"/>
<dbReference type="iPTMnet" id="Q8BTF8"/>
<dbReference type="PhosphoSitePlus" id="Q8BTF8"/>
<dbReference type="jPOST" id="Q8BTF8"/>
<dbReference type="PaxDb" id="10090-ENSMUSP00000104009"/>
<dbReference type="PeptideAtlas" id="Q8BTF8"/>
<dbReference type="ProteomicsDB" id="300392">
    <molecule id="Q8BTF8-1"/>
</dbReference>
<dbReference type="ProteomicsDB" id="300393">
    <molecule id="Q8BTF8-2"/>
</dbReference>
<dbReference type="Antibodypedia" id="25367">
    <property type="antibodies" value="133 antibodies from 20 providers"/>
</dbReference>
<dbReference type="DNASU" id="76897"/>
<dbReference type="Ensembl" id="ENSMUST00000108372.4">
    <molecule id="Q8BTF8-2"/>
    <property type="protein sequence ID" value="ENSMUSP00000104009.3"/>
    <property type="gene ID" value="ENSMUSG00000039717.17"/>
</dbReference>
<dbReference type="Ensembl" id="ENSMUST00000193117.3">
    <molecule id="Q8BTF8-1"/>
    <property type="protein sequence ID" value="ENSMUSP00000148795.2"/>
    <property type="gene ID" value="ENSMUSG00000039717.17"/>
</dbReference>
<dbReference type="GeneID" id="76897"/>
<dbReference type="KEGG" id="mmu:76897"/>
<dbReference type="UCSC" id="uc008oqb.2">
    <molecule id="Q8BTF8-1"/>
    <property type="organism name" value="mouse"/>
</dbReference>
<dbReference type="UCSC" id="uc008oqf.2">
    <molecule id="Q8BTF8-2"/>
    <property type="organism name" value="mouse"/>
</dbReference>
<dbReference type="AGR" id="MGI:1924147"/>
<dbReference type="CTD" id="138046"/>
<dbReference type="MGI" id="MGI:1924147">
    <property type="gene designation" value="Ralyl"/>
</dbReference>
<dbReference type="VEuPathDB" id="HostDB:ENSMUSG00000039717"/>
<dbReference type="eggNOG" id="KOG0118">
    <property type="taxonomic scope" value="Eukaryota"/>
</dbReference>
<dbReference type="GeneTree" id="ENSGT00940000156907"/>
<dbReference type="HOGENOM" id="CLU_079090_2_0_1"/>
<dbReference type="InParanoid" id="Q8BTF8"/>
<dbReference type="OMA" id="KQMEDHA"/>
<dbReference type="OrthoDB" id="6730379at2759"/>
<dbReference type="PhylomeDB" id="Q8BTF8"/>
<dbReference type="TreeFam" id="TF330974"/>
<dbReference type="BioGRID-ORCS" id="76897">
    <property type="hits" value="2 hits in 76 CRISPR screens"/>
</dbReference>
<dbReference type="ChiTaRS" id="Ralyl">
    <property type="organism name" value="mouse"/>
</dbReference>
<dbReference type="PRO" id="PR:Q8BTF8"/>
<dbReference type="Proteomes" id="UP000000589">
    <property type="component" value="Chromosome 3"/>
</dbReference>
<dbReference type="RNAct" id="Q8BTF8">
    <property type="molecule type" value="protein"/>
</dbReference>
<dbReference type="Bgee" id="ENSMUSG00000039717">
    <property type="expression patterns" value="Expressed in mammillary body and 107 other cell types or tissues"/>
</dbReference>
<dbReference type="ExpressionAtlas" id="Q8BTF8">
    <property type="expression patterns" value="baseline and differential"/>
</dbReference>
<dbReference type="GO" id="GO:0005654">
    <property type="term" value="C:nucleoplasm"/>
    <property type="evidence" value="ECO:0007669"/>
    <property type="project" value="Ensembl"/>
</dbReference>
<dbReference type="GO" id="GO:0042802">
    <property type="term" value="F:identical protein binding"/>
    <property type="evidence" value="ECO:0007669"/>
    <property type="project" value="Ensembl"/>
</dbReference>
<dbReference type="GO" id="GO:0003723">
    <property type="term" value="F:RNA binding"/>
    <property type="evidence" value="ECO:0007669"/>
    <property type="project" value="UniProtKB-KW"/>
</dbReference>
<dbReference type="FunFam" id="3.30.70.330:FF:000019">
    <property type="entry name" value="heterogeneous nuclear ribonucleoproteins C1/C2 isoform X1"/>
    <property type="match status" value="1"/>
</dbReference>
<dbReference type="Gene3D" id="3.30.70.330">
    <property type="match status" value="1"/>
</dbReference>
<dbReference type="InterPro" id="IPR017347">
    <property type="entry name" value="hnRNP_C"/>
</dbReference>
<dbReference type="InterPro" id="IPR012677">
    <property type="entry name" value="Nucleotide-bd_a/b_plait_sf"/>
</dbReference>
<dbReference type="InterPro" id="IPR035979">
    <property type="entry name" value="RBD_domain_sf"/>
</dbReference>
<dbReference type="InterPro" id="IPR000504">
    <property type="entry name" value="RRM_dom"/>
</dbReference>
<dbReference type="InterPro" id="IPR051186">
    <property type="entry name" value="RRM_HNRPC/RALY_subfam"/>
</dbReference>
<dbReference type="PANTHER" id="PTHR13968">
    <property type="entry name" value="HETEROGENEOUS NUCLEAR RIBONUCLEOPROTEIN"/>
    <property type="match status" value="1"/>
</dbReference>
<dbReference type="PANTHER" id="PTHR13968:SF21">
    <property type="entry name" value="RNA-BINDING RALY-LIKE PROTEIN"/>
    <property type="match status" value="1"/>
</dbReference>
<dbReference type="Pfam" id="PF00076">
    <property type="entry name" value="RRM_1"/>
    <property type="match status" value="1"/>
</dbReference>
<dbReference type="PIRSF" id="PIRSF037992">
    <property type="entry name" value="hnRNP-C_Raly"/>
    <property type="match status" value="1"/>
</dbReference>
<dbReference type="SMART" id="SM00360">
    <property type="entry name" value="RRM"/>
    <property type="match status" value="1"/>
</dbReference>
<dbReference type="SUPFAM" id="SSF54928">
    <property type="entry name" value="RNA-binding domain, RBD"/>
    <property type="match status" value="1"/>
</dbReference>
<dbReference type="PROSITE" id="PS50102">
    <property type="entry name" value="RRM"/>
    <property type="match status" value="1"/>
</dbReference>
<proteinExistence type="evidence at transcript level"/>
<comment type="alternative products">
    <event type="alternative splicing"/>
    <isoform>
        <id>Q8BTF8-1</id>
        <name>1</name>
        <sequence type="displayed"/>
    </isoform>
    <isoform>
        <id>Q8BTF8-2</id>
        <name>2</name>
        <sequence type="described" ref="VSP_027727 VSP_027728"/>
    </isoform>
</comment>
<comment type="similarity">
    <text evidence="6">Belongs to the RRM HNRPC family. RALY subfamily.</text>
</comment>
<reference key="1">
    <citation type="journal article" date="2005" name="Science">
        <title>The transcriptional landscape of the mammalian genome.</title>
        <authorList>
            <person name="Carninci P."/>
            <person name="Kasukawa T."/>
            <person name="Katayama S."/>
            <person name="Gough J."/>
            <person name="Frith M.C."/>
            <person name="Maeda N."/>
            <person name="Oyama R."/>
            <person name="Ravasi T."/>
            <person name="Lenhard B."/>
            <person name="Wells C."/>
            <person name="Kodzius R."/>
            <person name="Shimokawa K."/>
            <person name="Bajic V.B."/>
            <person name="Brenner S.E."/>
            <person name="Batalov S."/>
            <person name="Forrest A.R."/>
            <person name="Zavolan M."/>
            <person name="Davis M.J."/>
            <person name="Wilming L.G."/>
            <person name="Aidinis V."/>
            <person name="Allen J.E."/>
            <person name="Ambesi-Impiombato A."/>
            <person name="Apweiler R."/>
            <person name="Aturaliya R.N."/>
            <person name="Bailey T.L."/>
            <person name="Bansal M."/>
            <person name="Baxter L."/>
            <person name="Beisel K.W."/>
            <person name="Bersano T."/>
            <person name="Bono H."/>
            <person name="Chalk A.M."/>
            <person name="Chiu K.P."/>
            <person name="Choudhary V."/>
            <person name="Christoffels A."/>
            <person name="Clutterbuck D.R."/>
            <person name="Crowe M.L."/>
            <person name="Dalla E."/>
            <person name="Dalrymple B.P."/>
            <person name="de Bono B."/>
            <person name="Della Gatta G."/>
            <person name="di Bernardo D."/>
            <person name="Down T."/>
            <person name="Engstrom P."/>
            <person name="Fagiolini M."/>
            <person name="Faulkner G."/>
            <person name="Fletcher C.F."/>
            <person name="Fukushima T."/>
            <person name="Furuno M."/>
            <person name="Futaki S."/>
            <person name="Gariboldi M."/>
            <person name="Georgii-Hemming P."/>
            <person name="Gingeras T.R."/>
            <person name="Gojobori T."/>
            <person name="Green R.E."/>
            <person name="Gustincich S."/>
            <person name="Harbers M."/>
            <person name="Hayashi Y."/>
            <person name="Hensch T.K."/>
            <person name="Hirokawa N."/>
            <person name="Hill D."/>
            <person name="Huminiecki L."/>
            <person name="Iacono M."/>
            <person name="Ikeo K."/>
            <person name="Iwama A."/>
            <person name="Ishikawa T."/>
            <person name="Jakt M."/>
            <person name="Kanapin A."/>
            <person name="Katoh M."/>
            <person name="Kawasawa Y."/>
            <person name="Kelso J."/>
            <person name="Kitamura H."/>
            <person name="Kitano H."/>
            <person name="Kollias G."/>
            <person name="Krishnan S.P."/>
            <person name="Kruger A."/>
            <person name="Kummerfeld S.K."/>
            <person name="Kurochkin I.V."/>
            <person name="Lareau L.F."/>
            <person name="Lazarevic D."/>
            <person name="Lipovich L."/>
            <person name="Liu J."/>
            <person name="Liuni S."/>
            <person name="McWilliam S."/>
            <person name="Madan Babu M."/>
            <person name="Madera M."/>
            <person name="Marchionni L."/>
            <person name="Matsuda H."/>
            <person name="Matsuzawa S."/>
            <person name="Miki H."/>
            <person name="Mignone F."/>
            <person name="Miyake S."/>
            <person name="Morris K."/>
            <person name="Mottagui-Tabar S."/>
            <person name="Mulder N."/>
            <person name="Nakano N."/>
            <person name="Nakauchi H."/>
            <person name="Ng P."/>
            <person name="Nilsson R."/>
            <person name="Nishiguchi S."/>
            <person name="Nishikawa S."/>
            <person name="Nori F."/>
            <person name="Ohara O."/>
            <person name="Okazaki Y."/>
            <person name="Orlando V."/>
            <person name="Pang K.C."/>
            <person name="Pavan W.J."/>
            <person name="Pavesi G."/>
            <person name="Pesole G."/>
            <person name="Petrovsky N."/>
            <person name="Piazza S."/>
            <person name="Reed J."/>
            <person name="Reid J.F."/>
            <person name="Ring B.Z."/>
            <person name="Ringwald M."/>
            <person name="Rost B."/>
            <person name="Ruan Y."/>
            <person name="Salzberg S.L."/>
            <person name="Sandelin A."/>
            <person name="Schneider C."/>
            <person name="Schoenbach C."/>
            <person name="Sekiguchi K."/>
            <person name="Semple C.A."/>
            <person name="Seno S."/>
            <person name="Sessa L."/>
            <person name="Sheng Y."/>
            <person name="Shibata Y."/>
            <person name="Shimada H."/>
            <person name="Shimada K."/>
            <person name="Silva D."/>
            <person name="Sinclair B."/>
            <person name="Sperling S."/>
            <person name="Stupka E."/>
            <person name="Sugiura K."/>
            <person name="Sultana R."/>
            <person name="Takenaka Y."/>
            <person name="Taki K."/>
            <person name="Tammoja K."/>
            <person name="Tan S.L."/>
            <person name="Tang S."/>
            <person name="Taylor M.S."/>
            <person name="Tegner J."/>
            <person name="Teichmann S.A."/>
            <person name="Ueda H.R."/>
            <person name="van Nimwegen E."/>
            <person name="Verardo R."/>
            <person name="Wei C.L."/>
            <person name="Yagi K."/>
            <person name="Yamanishi H."/>
            <person name="Zabarovsky E."/>
            <person name="Zhu S."/>
            <person name="Zimmer A."/>
            <person name="Hide W."/>
            <person name="Bult C."/>
            <person name="Grimmond S.M."/>
            <person name="Teasdale R.D."/>
            <person name="Liu E.T."/>
            <person name="Brusic V."/>
            <person name="Quackenbush J."/>
            <person name="Wahlestedt C."/>
            <person name="Mattick J.S."/>
            <person name="Hume D.A."/>
            <person name="Kai C."/>
            <person name="Sasaki D."/>
            <person name="Tomaru Y."/>
            <person name="Fukuda S."/>
            <person name="Kanamori-Katayama M."/>
            <person name="Suzuki M."/>
            <person name="Aoki J."/>
            <person name="Arakawa T."/>
            <person name="Iida J."/>
            <person name="Imamura K."/>
            <person name="Itoh M."/>
            <person name="Kato T."/>
            <person name="Kawaji H."/>
            <person name="Kawagashira N."/>
            <person name="Kawashima T."/>
            <person name="Kojima M."/>
            <person name="Kondo S."/>
            <person name="Konno H."/>
            <person name="Nakano K."/>
            <person name="Ninomiya N."/>
            <person name="Nishio T."/>
            <person name="Okada M."/>
            <person name="Plessy C."/>
            <person name="Shibata K."/>
            <person name="Shiraki T."/>
            <person name="Suzuki S."/>
            <person name="Tagami M."/>
            <person name="Waki K."/>
            <person name="Watahiki A."/>
            <person name="Okamura-Oho Y."/>
            <person name="Suzuki H."/>
            <person name="Kawai J."/>
            <person name="Hayashizaki Y."/>
        </authorList>
    </citation>
    <scope>NUCLEOTIDE SEQUENCE [LARGE SCALE MRNA] (ISOFORMS 1 AND 2)</scope>
    <source>
        <strain>C57BL/6J</strain>
        <tissue>Hypothalamus</tissue>
        <tissue>Medulla oblongata</tissue>
        <tissue>Spinal cord</tissue>
    </source>
</reference>
<reference key="2">
    <citation type="journal article" date="2004" name="Genome Res.">
        <title>The status, quality, and expansion of the NIH full-length cDNA project: the Mammalian Gene Collection (MGC).</title>
        <authorList>
            <consortium name="The MGC Project Team"/>
        </authorList>
    </citation>
    <scope>NUCLEOTIDE SEQUENCE [LARGE SCALE MRNA] (ISOFORM 2)</scope>
    <source>
        <tissue>Brain</tissue>
    </source>
</reference>
<protein>
    <recommendedName>
        <fullName>RNA-binding Raly-like protein</fullName>
    </recommendedName>
</protein>
<accession>Q8BTF8</accession>
<accession>Q8BTF9</accession>
<accession>Q8BTG1</accession>
<organism>
    <name type="scientific">Mus musculus</name>
    <name type="common">Mouse</name>
    <dbReference type="NCBI Taxonomy" id="10090"/>
    <lineage>
        <taxon>Eukaryota</taxon>
        <taxon>Metazoa</taxon>
        <taxon>Chordata</taxon>
        <taxon>Craniata</taxon>
        <taxon>Vertebrata</taxon>
        <taxon>Euteleostomi</taxon>
        <taxon>Mammalia</taxon>
        <taxon>Eutheria</taxon>
        <taxon>Euarchontoglires</taxon>
        <taxon>Glires</taxon>
        <taxon>Rodentia</taxon>
        <taxon>Myomorpha</taxon>
        <taxon>Muroidea</taxon>
        <taxon>Muridae</taxon>
        <taxon>Murinae</taxon>
        <taxon>Mus</taxon>
        <taxon>Mus</taxon>
    </lineage>
</organism>
<gene>
    <name type="primary">Ralyl</name>
</gene>
<evidence type="ECO:0000255" key="1"/>
<evidence type="ECO:0000255" key="2">
    <source>
        <dbReference type="PROSITE-ProRule" id="PRU00176"/>
    </source>
</evidence>
<evidence type="ECO:0000256" key="3">
    <source>
        <dbReference type="SAM" id="MobiDB-lite"/>
    </source>
</evidence>
<evidence type="ECO:0000303" key="4">
    <source>
    </source>
</evidence>
<evidence type="ECO:0000303" key="5">
    <source>
    </source>
</evidence>
<evidence type="ECO:0000305" key="6"/>
<name>RALYL_MOUSE</name>
<feature type="chain" id="PRO_0000299526" description="RNA-binding Raly-like protein">
    <location>
        <begin position="1"/>
        <end position="293"/>
    </location>
</feature>
<feature type="domain" description="RRM" evidence="2">
    <location>
        <begin position="21"/>
        <end position="92"/>
    </location>
</feature>
<feature type="region of interest" description="Disordered" evidence="3">
    <location>
        <begin position="171"/>
        <end position="195"/>
    </location>
</feature>
<feature type="region of interest" description="Disordered" evidence="3">
    <location>
        <begin position="236"/>
        <end position="293"/>
    </location>
</feature>
<feature type="coiled-coil region" evidence="1">
    <location>
        <begin position="192"/>
        <end position="255"/>
    </location>
</feature>
<feature type="compositionally biased region" description="Low complexity" evidence="3">
    <location>
        <begin position="176"/>
        <end position="192"/>
    </location>
</feature>
<feature type="compositionally biased region" description="Acidic residues" evidence="3">
    <location>
        <begin position="239"/>
        <end position="249"/>
    </location>
</feature>
<feature type="compositionally biased region" description="Acidic residues" evidence="3">
    <location>
        <begin position="268"/>
        <end position="284"/>
    </location>
</feature>
<feature type="splice variant" id="VSP_027727" description="In isoform 2." evidence="4 5">
    <location>
        <begin position="1"/>
        <end position="73"/>
    </location>
</feature>
<feature type="splice variant" id="VSP_027728" description="In isoform 2." evidence="4 5">
    <original>GENARVIAGQPLD</original>
    <variation>MTMYRSKRRHQRY</variation>
    <location>
        <begin position="74"/>
        <end position="86"/>
    </location>
</feature>
<feature type="sequence conflict" description="In Ref. 1; BAC27689." evidence="6" ref="1">
    <original>K</original>
    <variation>R</variation>
    <location>
        <position position="211"/>
    </location>
</feature>